<gene>
    <name type="primary">chs-4</name>
    <name type="ORF">NCU09324</name>
</gene>
<comment type="function">
    <text evidence="4">Polymerizes chitin, a structural polymer of the cell wall and septum, by transferring the sugar moiety of UDP-GlcNAc to the non-reducing end of the growing chitin polymer.</text>
</comment>
<comment type="catalytic activity">
    <reaction>
        <text>[(1-&gt;4)-N-acetyl-beta-D-glucosaminyl](n) + UDP-N-acetyl-alpha-D-glucosamine = [(1-&gt;4)-N-acetyl-beta-D-glucosaminyl](n+1) + UDP + H(+)</text>
        <dbReference type="Rhea" id="RHEA:16637"/>
        <dbReference type="Rhea" id="RHEA-COMP:9593"/>
        <dbReference type="Rhea" id="RHEA-COMP:9595"/>
        <dbReference type="ChEBI" id="CHEBI:15378"/>
        <dbReference type="ChEBI" id="CHEBI:17029"/>
        <dbReference type="ChEBI" id="CHEBI:57705"/>
        <dbReference type="ChEBI" id="CHEBI:58223"/>
        <dbReference type="EC" id="2.4.1.16"/>
    </reaction>
</comment>
<comment type="subcellular location">
    <subcellularLocation>
        <location evidence="4">Cell membrane</location>
        <topology evidence="1">Multi-pass membrane protein</topology>
    </subcellularLocation>
</comment>
<comment type="similarity">
    <text evidence="4">Belongs to the chitin synthase family. Class IV subfamily.</text>
</comment>
<comment type="sequence caution" evidence="4">
    <conflict type="erroneous initiation">
        <sequence resource="EMBL-CDS" id="AAB03563"/>
    </conflict>
</comment>
<sequence length="1235" mass="137990">MSLPRRPGPSPPHEEPRRYRQSGSRRSRPPPADVETGYAPMAGERPSQQQRVPSISSFPETLPSPNPNVERDPLAPTPEPAHPSGIPQRKRSLIRPERNRIGKDHPNYHYRKHAANMNTLPSSTGHDPIYEDLEGATDDVSGTGSRNDDDVSEESPPRRKHSTKMQVIETEKSGDERRRRRKSDTTKHGKIVKASKGKREKSGGLPTPSFWNIYCGFVTFWCPGFVLKCFGMPEMAQQRAWREKMGLISIILLIMGFVGFITFGFTQVVCGKPPLRLRINEVGSGYMIFHGSAYDLTKSHHPPAEGIPRRPDGLGANVIYDLPQHYGGQDGSFLFQNVNGKCKGLITKQENSDVPSDKSGNLAWYFPCNTFNQDGSSKPNTTIPYYLGYACHTTANARDSFYLGLKSSADVYFTWDDIKNSSRNLVVYSGHVLDLDLLHWFNDTQVTYPARFKELRDKNTAGNQAIRGRDITHAFQSSKDKQIAECFEEIIKVGSVDTETVGCIASKVVLYVSLVLILAVVLARFVLALIFQWFISKTYAAAKTSQTSDQRKRNRQIEDWTEDIYRAPPRLPGEVGSSVAGSSDRQSKRSSAFLPTHSRFSTVYGNERGNRKPGLPTTMASQNAAGQLLHPGTIYGQGNESRSSFLKSDAYGSSSSPADGPGPAGFIHEAVVPQPPSDWMPFGFPLAHTICLVTAYSEGEMGVRTTLDSIAMTDYPNSHKVILVICDGIIKGHGEEHSTPDIILGMMKDHTIHPDDVEPFSYVAVATGSKRHNMAKVYTGFYDYGTNSAIPLEKQQRVPMMMVVKCGTPAEASKSKPGNRGKRDSQIILMSFLQKVMFDERMTELEYEMFNGLWKITGISPDFYEIVLMVDADTKVFPDSLTHMISAMVKDPEIMGLCGETKIANKRASWVSAIQVFEYFVSHHLAKAFESVFGGVTCLPGCFCMYRIKAPKGAQNYWVPILANPDVVEHYSENVVDTLHKKNLLLLGEDRYLSTLMLRTFPKRKQVFVPQAVCKTTVPDEFMVLLSQRRRWINSTIHNLMELVLVRDLCGTFCFSMQFIVGIELIGTLVLPAAIAFTFYVVIISIINSPPQIIPLVLLGLILGLPAILVVVTAHSWSYIIWMFIYLLSLPVWNFVLPTYAFWKFDDFSWGDTRKTAGEKSSKGGHGEAEGEFDSSMITMKRWAEFERDRRVRSTYWAGSRDNVISGVGGSNGWGSSQPRGHEQGRHFDDYFSDA</sequence>
<feature type="chain" id="PRO_0000193704" description="Chitin synthase 4">
    <location>
        <begin position="1"/>
        <end position="1235"/>
    </location>
</feature>
<feature type="topological domain" description="Cytoplasmic" evidence="4">
    <location>
        <begin position="1"/>
        <end position="212"/>
    </location>
</feature>
<feature type="transmembrane region" description="Helical" evidence="1">
    <location>
        <begin position="213"/>
        <end position="233"/>
    </location>
</feature>
<feature type="topological domain" description="Extracellular" evidence="4">
    <location>
        <begin position="234"/>
        <end position="244"/>
    </location>
</feature>
<feature type="transmembrane region" description="Helical" evidence="1">
    <location>
        <begin position="245"/>
        <end position="265"/>
    </location>
</feature>
<feature type="topological domain" description="Cytoplasmic" evidence="4">
    <location>
        <begin position="266"/>
        <end position="514"/>
    </location>
</feature>
<feature type="transmembrane region" description="Helical" evidence="1">
    <location>
        <begin position="515"/>
        <end position="535"/>
    </location>
</feature>
<feature type="topological domain" description="Extracellular" evidence="4">
    <location>
        <begin position="536"/>
        <end position="1065"/>
    </location>
</feature>
<feature type="transmembrane region" description="Helical" evidence="1">
    <location>
        <begin position="1066"/>
        <end position="1086"/>
    </location>
</feature>
<feature type="topological domain" description="Cytoplasmic" evidence="4">
    <location>
        <begin position="1087"/>
        <end position="1092"/>
    </location>
</feature>
<feature type="transmembrane region" description="Helical" evidence="1">
    <location>
        <begin position="1093"/>
        <end position="1113"/>
    </location>
</feature>
<feature type="topological domain" description="Extracellular" evidence="4">
    <location>
        <begin position="1114"/>
        <end position="1116"/>
    </location>
</feature>
<feature type="transmembrane region" description="Helical" evidence="1">
    <location>
        <begin position="1117"/>
        <end position="1137"/>
    </location>
</feature>
<feature type="topological domain" description="Cytoplasmic" evidence="4">
    <location>
        <begin position="1138"/>
        <end position="1235"/>
    </location>
</feature>
<feature type="region of interest" description="Disordered" evidence="3">
    <location>
        <begin position="1"/>
        <end position="203"/>
    </location>
</feature>
<feature type="region of interest" description="Disordered" evidence="3">
    <location>
        <begin position="545"/>
        <end position="592"/>
    </location>
</feature>
<feature type="region of interest" description="Disordered" evidence="3">
    <location>
        <begin position="645"/>
        <end position="670"/>
    </location>
</feature>
<feature type="region of interest" description="Disordered" evidence="3">
    <location>
        <begin position="1201"/>
        <end position="1235"/>
    </location>
</feature>
<feature type="compositionally biased region" description="Pro residues" evidence="3">
    <location>
        <begin position="1"/>
        <end position="11"/>
    </location>
</feature>
<feature type="compositionally biased region" description="Basic residues" evidence="3">
    <location>
        <begin position="19"/>
        <end position="28"/>
    </location>
</feature>
<feature type="compositionally biased region" description="Polar residues" evidence="3">
    <location>
        <begin position="46"/>
        <end position="59"/>
    </location>
</feature>
<feature type="compositionally biased region" description="Basic and acidic residues" evidence="3">
    <location>
        <begin position="94"/>
        <end position="107"/>
    </location>
</feature>
<feature type="compositionally biased region" description="Polar residues" evidence="3">
    <location>
        <begin position="116"/>
        <end position="125"/>
    </location>
</feature>
<feature type="compositionally biased region" description="Basic and acidic residues" evidence="3">
    <location>
        <begin position="169"/>
        <end position="187"/>
    </location>
</feature>
<feature type="compositionally biased region" description="Basic residues" evidence="3">
    <location>
        <begin position="188"/>
        <end position="199"/>
    </location>
</feature>
<feature type="compositionally biased region" description="Basic and acidic residues" evidence="3">
    <location>
        <begin position="549"/>
        <end position="558"/>
    </location>
</feature>
<feature type="compositionally biased region" description="Low complexity" evidence="3">
    <location>
        <begin position="648"/>
        <end position="665"/>
    </location>
</feature>
<feature type="compositionally biased region" description="Basic and acidic residues" evidence="3">
    <location>
        <begin position="1220"/>
        <end position="1235"/>
    </location>
</feature>
<feature type="glycosylation site" description="N-linked (GlcNAc...) asparagine" evidence="2">
    <location>
        <position position="639"/>
    </location>
</feature>
<feature type="glycosylation site" description="N-linked (GlcNAc...) asparagine" evidence="2">
    <location>
        <position position="1034"/>
    </location>
</feature>
<feature type="sequence conflict" description="In Ref. 1; AAB03563." evidence="4" ref="1">
    <original>D</original>
    <variation>Y</variation>
    <location>
        <position position="480"/>
    </location>
</feature>
<feature type="sequence conflict" description="In Ref. 1; AAB03563." evidence="4" ref="1">
    <original>D</original>
    <variation>E</variation>
    <location>
        <position position="563"/>
    </location>
</feature>
<accession>Q01285</accession>
<accession>Q7RVJ8</accession>
<accession>V5IPD9</accession>
<protein>
    <recommendedName>
        <fullName>Chitin synthase 4</fullName>
        <ecNumber>2.4.1.16</ecNumber>
    </recommendedName>
    <alternativeName>
        <fullName>Chitin-UDP acetyl-glucosaminyl transferase 4</fullName>
    </alternativeName>
    <alternativeName>
        <fullName>Class-IV chitin synthase 4</fullName>
    </alternativeName>
</protein>
<keyword id="KW-1003">Cell membrane</keyword>
<keyword id="KW-0961">Cell wall biogenesis/degradation</keyword>
<keyword id="KW-0325">Glycoprotein</keyword>
<keyword id="KW-0328">Glycosyltransferase</keyword>
<keyword id="KW-0472">Membrane</keyword>
<keyword id="KW-1185">Reference proteome</keyword>
<keyword id="KW-0808">Transferase</keyword>
<keyword id="KW-0812">Transmembrane</keyword>
<keyword id="KW-1133">Transmembrane helix</keyword>
<organism>
    <name type="scientific">Neurospora crassa (strain ATCC 24698 / 74-OR23-1A / CBS 708.71 / DSM 1257 / FGSC 987)</name>
    <dbReference type="NCBI Taxonomy" id="367110"/>
    <lineage>
        <taxon>Eukaryota</taxon>
        <taxon>Fungi</taxon>
        <taxon>Dikarya</taxon>
        <taxon>Ascomycota</taxon>
        <taxon>Pezizomycotina</taxon>
        <taxon>Sordariomycetes</taxon>
        <taxon>Sordariomycetidae</taxon>
        <taxon>Sordariales</taxon>
        <taxon>Sordariaceae</taxon>
        <taxon>Neurospora</taxon>
    </lineage>
</organism>
<proteinExistence type="inferred from homology"/>
<reference key="1">
    <citation type="journal article" date="1996" name="Mol. Gen. Genet.">
        <title>chs-4, a class IV chitin synthase gene from Neurospora crassa.</title>
        <authorList>
            <person name="Din A.B."/>
            <person name="Specht C.A."/>
            <person name="Robbins P.W."/>
            <person name="Yarden O."/>
        </authorList>
    </citation>
    <scope>NUCLEOTIDE SEQUENCE [GENOMIC DNA]</scope>
    <source>
        <strain>ATCC 24698 / 74-OR23-1A / CBS 708.71 / DSM 1257 / FGSC 987</strain>
    </source>
</reference>
<reference key="2">
    <citation type="journal article" date="2003" name="Nature">
        <title>The genome sequence of the filamentous fungus Neurospora crassa.</title>
        <authorList>
            <person name="Galagan J.E."/>
            <person name="Calvo S.E."/>
            <person name="Borkovich K.A."/>
            <person name="Selker E.U."/>
            <person name="Read N.D."/>
            <person name="Jaffe D.B."/>
            <person name="FitzHugh W."/>
            <person name="Ma L.-J."/>
            <person name="Smirnov S."/>
            <person name="Purcell S."/>
            <person name="Rehman B."/>
            <person name="Elkins T."/>
            <person name="Engels R."/>
            <person name="Wang S."/>
            <person name="Nielsen C.B."/>
            <person name="Butler J."/>
            <person name="Endrizzi M."/>
            <person name="Qui D."/>
            <person name="Ianakiev P."/>
            <person name="Bell-Pedersen D."/>
            <person name="Nelson M.A."/>
            <person name="Werner-Washburne M."/>
            <person name="Selitrennikoff C.P."/>
            <person name="Kinsey J.A."/>
            <person name="Braun E.L."/>
            <person name="Zelter A."/>
            <person name="Schulte U."/>
            <person name="Kothe G.O."/>
            <person name="Jedd G."/>
            <person name="Mewes H.-W."/>
            <person name="Staben C."/>
            <person name="Marcotte E."/>
            <person name="Greenberg D."/>
            <person name="Roy A."/>
            <person name="Foley K."/>
            <person name="Naylor J."/>
            <person name="Stange-Thomann N."/>
            <person name="Barrett R."/>
            <person name="Gnerre S."/>
            <person name="Kamal M."/>
            <person name="Kamvysselis M."/>
            <person name="Mauceli E.W."/>
            <person name="Bielke C."/>
            <person name="Rudd S."/>
            <person name="Frishman D."/>
            <person name="Krystofova S."/>
            <person name="Rasmussen C."/>
            <person name="Metzenberg R.L."/>
            <person name="Perkins D.D."/>
            <person name="Kroken S."/>
            <person name="Cogoni C."/>
            <person name="Macino G."/>
            <person name="Catcheside D.E.A."/>
            <person name="Li W."/>
            <person name="Pratt R.J."/>
            <person name="Osmani S.A."/>
            <person name="DeSouza C.P.C."/>
            <person name="Glass N.L."/>
            <person name="Orbach M.J."/>
            <person name="Berglund J.A."/>
            <person name="Voelker R."/>
            <person name="Yarden O."/>
            <person name="Plamann M."/>
            <person name="Seiler S."/>
            <person name="Dunlap J.C."/>
            <person name="Radford A."/>
            <person name="Aramayo R."/>
            <person name="Natvig D.O."/>
            <person name="Alex L.A."/>
            <person name="Mannhaupt G."/>
            <person name="Ebbole D.J."/>
            <person name="Freitag M."/>
            <person name="Paulsen I."/>
            <person name="Sachs M.S."/>
            <person name="Lander E.S."/>
            <person name="Nusbaum C."/>
            <person name="Birren B.W."/>
        </authorList>
    </citation>
    <scope>NUCLEOTIDE SEQUENCE [LARGE SCALE GENOMIC DNA]</scope>
    <source>
        <strain>ATCC 24698 / 74-OR23-1A / CBS 708.71 / DSM 1257 / FGSC 987</strain>
    </source>
</reference>
<name>CHS4_NEUCR</name>
<dbReference type="EC" id="2.4.1.16"/>
<dbReference type="EMBL" id="U25097">
    <property type="protein sequence ID" value="AAB03563.1"/>
    <property type="status" value="ALT_INIT"/>
    <property type="molecule type" value="Genomic_DNA"/>
</dbReference>
<dbReference type="EMBL" id="CM002236">
    <property type="protein sequence ID" value="ESA44002.1"/>
    <property type="molecule type" value="Genomic_DNA"/>
</dbReference>
<dbReference type="EMBL" id="CM002236">
    <property type="protein sequence ID" value="ESA44003.1"/>
    <property type="molecule type" value="Genomic_DNA"/>
</dbReference>
<dbReference type="PIR" id="S61886">
    <property type="entry name" value="S61886"/>
</dbReference>
<dbReference type="RefSeq" id="XP_011393274.1">
    <property type="nucleotide sequence ID" value="XM_011394972.1"/>
</dbReference>
<dbReference type="RefSeq" id="XP_011393275.1">
    <property type="nucleotide sequence ID" value="XM_011394973.1"/>
</dbReference>
<dbReference type="FunCoup" id="Q01285">
    <property type="interactions" value="63"/>
</dbReference>
<dbReference type="STRING" id="367110.Q01285"/>
<dbReference type="CAZy" id="GT2">
    <property type="family name" value="Glycosyltransferase Family 2"/>
</dbReference>
<dbReference type="GlyCosmos" id="Q01285">
    <property type="glycosylation" value="2 sites, No reported glycans"/>
</dbReference>
<dbReference type="PaxDb" id="5141-EFNCRP00000009136"/>
<dbReference type="EnsemblFungi" id="ESA44002">
    <property type="protein sequence ID" value="ESA44002"/>
    <property type="gene ID" value="NCU09324"/>
</dbReference>
<dbReference type="EnsemblFungi" id="ESA44003">
    <property type="protein sequence ID" value="ESA44003"/>
    <property type="gene ID" value="NCU09324"/>
</dbReference>
<dbReference type="GeneID" id="3880177"/>
<dbReference type="KEGG" id="ncr:NCU09324"/>
<dbReference type="VEuPathDB" id="FungiDB:NCU09324"/>
<dbReference type="HOGENOM" id="CLU_002572_1_0_1"/>
<dbReference type="InParanoid" id="Q01285"/>
<dbReference type="OMA" id="DIMGLCG"/>
<dbReference type="OrthoDB" id="370884at2759"/>
<dbReference type="BRENDA" id="2.4.1.16">
    <property type="organism ID" value="3627"/>
</dbReference>
<dbReference type="Proteomes" id="UP000001805">
    <property type="component" value="Chromosome 1, Linkage Group I"/>
</dbReference>
<dbReference type="GO" id="GO:0071944">
    <property type="term" value="C:cell periphery"/>
    <property type="evidence" value="ECO:0000318"/>
    <property type="project" value="GO_Central"/>
</dbReference>
<dbReference type="GO" id="GO:0030428">
    <property type="term" value="C:cell septum"/>
    <property type="evidence" value="ECO:0000318"/>
    <property type="project" value="GO_Central"/>
</dbReference>
<dbReference type="GO" id="GO:0005935">
    <property type="term" value="C:cellular bud neck"/>
    <property type="evidence" value="ECO:0007669"/>
    <property type="project" value="EnsemblFungi"/>
</dbReference>
<dbReference type="GO" id="GO:0045009">
    <property type="term" value="C:chitosome"/>
    <property type="evidence" value="ECO:0007669"/>
    <property type="project" value="EnsemblFungi"/>
</dbReference>
<dbReference type="GO" id="GO:0000131">
    <property type="term" value="C:incipient cellular bud site"/>
    <property type="evidence" value="ECO:0007669"/>
    <property type="project" value="EnsemblFungi"/>
</dbReference>
<dbReference type="GO" id="GO:0005886">
    <property type="term" value="C:plasma membrane"/>
    <property type="evidence" value="ECO:0007669"/>
    <property type="project" value="UniProtKB-SubCell"/>
</dbReference>
<dbReference type="GO" id="GO:0005628">
    <property type="term" value="C:prospore membrane"/>
    <property type="evidence" value="ECO:0007669"/>
    <property type="project" value="EnsemblFungi"/>
</dbReference>
<dbReference type="GO" id="GO:0004100">
    <property type="term" value="F:chitin synthase activity"/>
    <property type="evidence" value="ECO:0000318"/>
    <property type="project" value="GO_Central"/>
</dbReference>
<dbReference type="GO" id="GO:0030476">
    <property type="term" value="P:ascospore wall assembly"/>
    <property type="evidence" value="ECO:0007669"/>
    <property type="project" value="EnsemblFungi"/>
</dbReference>
<dbReference type="GO" id="GO:0006031">
    <property type="term" value="P:chitin biosynthetic process"/>
    <property type="evidence" value="ECO:0000318"/>
    <property type="project" value="GO_Central"/>
</dbReference>
<dbReference type="GO" id="GO:0097271">
    <property type="term" value="P:protein localization to bud neck"/>
    <property type="evidence" value="ECO:0007669"/>
    <property type="project" value="EnsemblFungi"/>
</dbReference>
<dbReference type="CDD" id="cd04190">
    <property type="entry name" value="Chitin_synth_C"/>
    <property type="match status" value="1"/>
</dbReference>
<dbReference type="Gene3D" id="3.90.550.10">
    <property type="entry name" value="Spore Coat Polysaccharide Biosynthesis Protein SpsA, Chain A"/>
    <property type="match status" value="1"/>
</dbReference>
<dbReference type="InterPro" id="IPR004835">
    <property type="entry name" value="Chitin_synth"/>
</dbReference>
<dbReference type="InterPro" id="IPR054295">
    <property type="entry name" value="CHS4-like_dom"/>
</dbReference>
<dbReference type="InterPro" id="IPR029044">
    <property type="entry name" value="Nucleotide-diphossugar_trans"/>
</dbReference>
<dbReference type="PANTHER" id="PTHR22914">
    <property type="entry name" value="CHITIN SYNTHASE"/>
    <property type="match status" value="1"/>
</dbReference>
<dbReference type="PANTHER" id="PTHR22914:SF16">
    <property type="entry name" value="CHITIN SYNTHASE 3"/>
    <property type="match status" value="1"/>
</dbReference>
<dbReference type="Pfam" id="PF03142">
    <property type="entry name" value="Chitin_synth_2"/>
    <property type="match status" value="1"/>
</dbReference>
<dbReference type="Pfam" id="PF22997">
    <property type="entry name" value="CHS4"/>
    <property type="match status" value="1"/>
</dbReference>
<dbReference type="SUPFAM" id="SSF53448">
    <property type="entry name" value="Nucleotide-diphospho-sugar transferases"/>
    <property type="match status" value="1"/>
</dbReference>
<evidence type="ECO:0000255" key="1"/>
<evidence type="ECO:0000255" key="2">
    <source>
        <dbReference type="PROSITE-ProRule" id="PRU00498"/>
    </source>
</evidence>
<evidence type="ECO:0000256" key="3">
    <source>
        <dbReference type="SAM" id="MobiDB-lite"/>
    </source>
</evidence>
<evidence type="ECO:0000305" key="4"/>